<dbReference type="EC" id="4.1.1.37" evidence="1"/>
<dbReference type="EMBL" id="CP000153">
    <property type="protein sequence ID" value="ABB43913.1"/>
    <property type="molecule type" value="Genomic_DNA"/>
</dbReference>
<dbReference type="RefSeq" id="WP_011372267.1">
    <property type="nucleotide sequence ID" value="NC_007575.1"/>
</dbReference>
<dbReference type="SMR" id="Q30SW8"/>
<dbReference type="STRING" id="326298.Suden_0634"/>
<dbReference type="KEGG" id="tdn:Suden_0634"/>
<dbReference type="eggNOG" id="COG0407">
    <property type="taxonomic scope" value="Bacteria"/>
</dbReference>
<dbReference type="HOGENOM" id="CLU_040933_0_0_7"/>
<dbReference type="OrthoDB" id="9806656at2"/>
<dbReference type="UniPathway" id="UPA00251">
    <property type="reaction ID" value="UER00321"/>
</dbReference>
<dbReference type="Proteomes" id="UP000002714">
    <property type="component" value="Chromosome"/>
</dbReference>
<dbReference type="GO" id="GO:0005829">
    <property type="term" value="C:cytosol"/>
    <property type="evidence" value="ECO:0007669"/>
    <property type="project" value="TreeGrafter"/>
</dbReference>
<dbReference type="GO" id="GO:0004853">
    <property type="term" value="F:uroporphyrinogen decarboxylase activity"/>
    <property type="evidence" value="ECO:0007669"/>
    <property type="project" value="UniProtKB-UniRule"/>
</dbReference>
<dbReference type="GO" id="GO:0019353">
    <property type="term" value="P:protoporphyrinogen IX biosynthetic process from glutamate"/>
    <property type="evidence" value="ECO:0007669"/>
    <property type="project" value="TreeGrafter"/>
</dbReference>
<dbReference type="CDD" id="cd00717">
    <property type="entry name" value="URO-D"/>
    <property type="match status" value="1"/>
</dbReference>
<dbReference type="FunFam" id="3.20.20.210:FF:000007">
    <property type="entry name" value="Uroporphyrinogen decarboxylase"/>
    <property type="match status" value="1"/>
</dbReference>
<dbReference type="Gene3D" id="3.20.20.210">
    <property type="match status" value="1"/>
</dbReference>
<dbReference type="HAMAP" id="MF_00218">
    <property type="entry name" value="URO_D"/>
    <property type="match status" value="1"/>
</dbReference>
<dbReference type="InterPro" id="IPR038071">
    <property type="entry name" value="UROD/MetE-like_sf"/>
</dbReference>
<dbReference type="InterPro" id="IPR006361">
    <property type="entry name" value="Uroporphyrinogen_deCO2ase_HemE"/>
</dbReference>
<dbReference type="InterPro" id="IPR000257">
    <property type="entry name" value="Uroporphyrinogen_deCOase"/>
</dbReference>
<dbReference type="NCBIfam" id="TIGR01464">
    <property type="entry name" value="hemE"/>
    <property type="match status" value="1"/>
</dbReference>
<dbReference type="PANTHER" id="PTHR21091">
    <property type="entry name" value="METHYLTETRAHYDROFOLATE:HOMOCYSTEINE METHYLTRANSFERASE RELATED"/>
    <property type="match status" value="1"/>
</dbReference>
<dbReference type="PANTHER" id="PTHR21091:SF169">
    <property type="entry name" value="UROPORPHYRINOGEN DECARBOXYLASE"/>
    <property type="match status" value="1"/>
</dbReference>
<dbReference type="Pfam" id="PF01208">
    <property type="entry name" value="URO-D"/>
    <property type="match status" value="1"/>
</dbReference>
<dbReference type="SUPFAM" id="SSF51726">
    <property type="entry name" value="UROD/MetE-like"/>
    <property type="match status" value="1"/>
</dbReference>
<dbReference type="PROSITE" id="PS00906">
    <property type="entry name" value="UROD_1"/>
    <property type="match status" value="1"/>
</dbReference>
<dbReference type="PROSITE" id="PS00907">
    <property type="entry name" value="UROD_2"/>
    <property type="match status" value="1"/>
</dbReference>
<name>DCUP_SULDN</name>
<feature type="chain" id="PRO_0000325699" description="Uroporphyrinogen decarboxylase">
    <location>
        <begin position="1"/>
        <end position="343"/>
    </location>
</feature>
<feature type="binding site" evidence="1">
    <location>
        <begin position="23"/>
        <end position="27"/>
    </location>
    <ligand>
        <name>substrate</name>
    </ligand>
</feature>
<feature type="binding site" evidence="1">
    <location>
        <position position="73"/>
    </location>
    <ligand>
        <name>substrate</name>
    </ligand>
</feature>
<feature type="binding site" evidence="1">
    <location>
        <position position="151"/>
    </location>
    <ligand>
        <name>substrate</name>
    </ligand>
</feature>
<feature type="binding site" evidence="1">
    <location>
        <position position="206"/>
    </location>
    <ligand>
        <name>substrate</name>
    </ligand>
</feature>
<feature type="binding site" evidence="1">
    <location>
        <position position="319"/>
    </location>
    <ligand>
        <name>substrate</name>
    </ligand>
</feature>
<feature type="site" description="Transition state stabilizer" evidence="1">
    <location>
        <position position="73"/>
    </location>
</feature>
<accession>Q30SW8</accession>
<comment type="function">
    <text evidence="1">Catalyzes the decarboxylation of four acetate groups of uroporphyrinogen-III to yield coproporphyrinogen-III.</text>
</comment>
<comment type="catalytic activity">
    <reaction evidence="1">
        <text>uroporphyrinogen III + 4 H(+) = coproporphyrinogen III + 4 CO2</text>
        <dbReference type="Rhea" id="RHEA:19865"/>
        <dbReference type="ChEBI" id="CHEBI:15378"/>
        <dbReference type="ChEBI" id="CHEBI:16526"/>
        <dbReference type="ChEBI" id="CHEBI:57308"/>
        <dbReference type="ChEBI" id="CHEBI:57309"/>
        <dbReference type="EC" id="4.1.1.37"/>
    </reaction>
</comment>
<comment type="pathway">
    <text evidence="1">Porphyrin-containing compound metabolism; protoporphyrin-IX biosynthesis; coproporphyrinogen-III from 5-aminolevulinate: step 4/4.</text>
</comment>
<comment type="subunit">
    <text evidence="1">Homodimer.</text>
</comment>
<comment type="subcellular location">
    <subcellularLocation>
        <location evidence="1">Cytoplasm</location>
    </subcellularLocation>
</comment>
<comment type="similarity">
    <text evidence="1">Belongs to the uroporphyrinogen decarboxylase family.</text>
</comment>
<reference key="1">
    <citation type="journal article" date="2008" name="Appl. Environ. Microbiol.">
        <title>Genome of the epsilonproteobacterial chemolithoautotroph Sulfurimonas denitrificans.</title>
        <authorList>
            <person name="Sievert S.M."/>
            <person name="Scott K.M."/>
            <person name="Klotz M.G."/>
            <person name="Chain P.S.G."/>
            <person name="Hauser L.J."/>
            <person name="Hemp J."/>
            <person name="Huegler M."/>
            <person name="Land M."/>
            <person name="Lapidus A."/>
            <person name="Larimer F.W."/>
            <person name="Lucas S."/>
            <person name="Malfatti S.A."/>
            <person name="Meyer F."/>
            <person name="Paulsen I.T."/>
            <person name="Ren Q."/>
            <person name="Simon J."/>
            <person name="Bailey K."/>
            <person name="Diaz E."/>
            <person name="Fitzpatrick K.A."/>
            <person name="Glover B."/>
            <person name="Gwatney N."/>
            <person name="Korajkic A."/>
            <person name="Long A."/>
            <person name="Mobberley J.M."/>
            <person name="Pantry S.N."/>
            <person name="Pazder G."/>
            <person name="Peterson S."/>
            <person name="Quintanilla J.D."/>
            <person name="Sprinkle R."/>
            <person name="Stephens J."/>
            <person name="Thomas P."/>
            <person name="Vaughn R."/>
            <person name="Weber M.J."/>
            <person name="Wooten L.L."/>
        </authorList>
    </citation>
    <scope>NUCLEOTIDE SEQUENCE [LARGE SCALE GENOMIC DNA]</scope>
    <source>
        <strain>ATCC 33889 / DSM 1251</strain>
    </source>
</reference>
<organism>
    <name type="scientific">Sulfurimonas denitrificans (strain ATCC 33889 / DSM 1251)</name>
    <name type="common">Thiomicrospira denitrificans (strain ATCC 33889 / DSM 1251)</name>
    <dbReference type="NCBI Taxonomy" id="326298"/>
    <lineage>
        <taxon>Bacteria</taxon>
        <taxon>Pseudomonadati</taxon>
        <taxon>Campylobacterota</taxon>
        <taxon>Epsilonproteobacteria</taxon>
        <taxon>Campylobacterales</taxon>
        <taxon>Sulfurimonadaceae</taxon>
        <taxon>Sulfurimonas</taxon>
    </lineage>
</organism>
<protein>
    <recommendedName>
        <fullName evidence="1">Uroporphyrinogen decarboxylase</fullName>
        <shortName evidence="1">UPD</shortName>
        <shortName evidence="1">URO-D</shortName>
        <ecNumber evidence="1">4.1.1.37</ecNumber>
    </recommendedName>
</protein>
<gene>
    <name evidence="1" type="primary">hemE</name>
    <name type="ordered locus">Suden_0634</name>
</gene>
<proteinExistence type="inferred from homology"/>
<sequence length="343" mass="39018">MSKIFVDACFGKETPYTPVWMMRQAGRYLPEYMRVRAEAGNFLNLCHDPKKACEVTLQPVDIVGVDAAILFSDILVVPLEMGMDLKFVTGEGPKFDDPIKNEADLDRLFGGDEAASKLTYVYDTIKLIKEQLAEDKALIGFTGAPWTLATYMIEGEGTKTYNICKKMMYSNPKLLHKILSKVTEVVKFYMEKQIEAGIDVVQIFDSWAAAIEPSKYDEFSWKYMVEIADYLKAKYPHIPIIMFPKGIPAFLDKVYGNFEVFGVDWSTPMDLAKEKLGERYVLQGNMEPCRLYSKEETTESVESIQKIMGGKRHIFNLGHGILPDVPVENAKHFIKECHRVSKK</sequence>
<keyword id="KW-0963">Cytoplasm</keyword>
<keyword id="KW-0210">Decarboxylase</keyword>
<keyword id="KW-0456">Lyase</keyword>
<keyword id="KW-0627">Porphyrin biosynthesis</keyword>
<keyword id="KW-1185">Reference proteome</keyword>
<evidence type="ECO:0000255" key="1">
    <source>
        <dbReference type="HAMAP-Rule" id="MF_00218"/>
    </source>
</evidence>